<sequence>MGQVFMVHHGDVEQALRRLKQHLSREGITPGRKRIFEKPSEKRHRRAVETRRKIRKQKLRVVPY</sequence>
<keyword id="KW-0687">Ribonucleoprotein</keyword>
<keyword id="KW-0689">Ribosomal protein</keyword>
<organism>
    <name type="scientific">Neorickettsia sennetsu (strain ATCC VR-367 / Miyayama)</name>
    <name type="common">Ehrlichia sennetsu</name>
    <dbReference type="NCBI Taxonomy" id="222891"/>
    <lineage>
        <taxon>Bacteria</taxon>
        <taxon>Pseudomonadati</taxon>
        <taxon>Pseudomonadota</taxon>
        <taxon>Alphaproteobacteria</taxon>
        <taxon>Rickettsiales</taxon>
        <taxon>Anaplasmataceae</taxon>
        <taxon>Neorickettsia</taxon>
    </lineage>
</organism>
<accession>Q2GCU9</accession>
<evidence type="ECO:0000255" key="1">
    <source>
        <dbReference type="HAMAP-Rule" id="MF_00358"/>
    </source>
</evidence>
<evidence type="ECO:0000305" key="2"/>
<reference key="1">
    <citation type="journal article" date="2006" name="PLoS Genet.">
        <title>Comparative genomics of emerging human ehrlichiosis agents.</title>
        <authorList>
            <person name="Dunning Hotopp J.C."/>
            <person name="Lin M."/>
            <person name="Madupu R."/>
            <person name="Crabtree J."/>
            <person name="Angiuoli S.V."/>
            <person name="Eisen J.A."/>
            <person name="Seshadri R."/>
            <person name="Ren Q."/>
            <person name="Wu M."/>
            <person name="Utterback T.R."/>
            <person name="Smith S."/>
            <person name="Lewis M."/>
            <person name="Khouri H."/>
            <person name="Zhang C."/>
            <person name="Niu H."/>
            <person name="Lin Q."/>
            <person name="Ohashi N."/>
            <person name="Zhi N."/>
            <person name="Nelson W.C."/>
            <person name="Brinkac L.M."/>
            <person name="Dodson R.J."/>
            <person name="Rosovitz M.J."/>
            <person name="Sundaram J.P."/>
            <person name="Daugherty S.C."/>
            <person name="Davidsen T."/>
            <person name="Durkin A.S."/>
            <person name="Gwinn M.L."/>
            <person name="Haft D.H."/>
            <person name="Selengut J.D."/>
            <person name="Sullivan S.A."/>
            <person name="Zafar N."/>
            <person name="Zhou L."/>
            <person name="Benahmed F."/>
            <person name="Forberger H."/>
            <person name="Halpin R."/>
            <person name="Mulligan S."/>
            <person name="Robinson J."/>
            <person name="White O."/>
            <person name="Rikihisa Y."/>
            <person name="Tettelin H."/>
        </authorList>
    </citation>
    <scope>NUCLEOTIDE SEQUENCE [LARGE SCALE GENOMIC DNA]</scope>
    <source>
        <strain>ATCC VR-367 / Miyayama</strain>
    </source>
</reference>
<name>RS21_NEOSM</name>
<feature type="chain" id="PRO_0000266712" description="Small ribosomal subunit protein bS21">
    <location>
        <begin position="1"/>
        <end position="64"/>
    </location>
</feature>
<protein>
    <recommendedName>
        <fullName evidence="1">Small ribosomal subunit protein bS21</fullName>
    </recommendedName>
    <alternativeName>
        <fullName evidence="2">30S ribosomal protein S21</fullName>
    </alternativeName>
</protein>
<dbReference type="EMBL" id="CP000237">
    <property type="protein sequence ID" value="ABD46478.1"/>
    <property type="molecule type" value="Genomic_DNA"/>
</dbReference>
<dbReference type="RefSeq" id="WP_011452203.1">
    <property type="nucleotide sequence ID" value="NC_007798.1"/>
</dbReference>
<dbReference type="SMR" id="Q2GCU9"/>
<dbReference type="STRING" id="222891.NSE_0827"/>
<dbReference type="KEGG" id="nse:NSE_0827"/>
<dbReference type="HOGENOM" id="CLU_159258_0_2_5"/>
<dbReference type="OrthoDB" id="9811907at2"/>
<dbReference type="Proteomes" id="UP000001942">
    <property type="component" value="Chromosome"/>
</dbReference>
<dbReference type="GO" id="GO:1990904">
    <property type="term" value="C:ribonucleoprotein complex"/>
    <property type="evidence" value="ECO:0007669"/>
    <property type="project" value="UniProtKB-KW"/>
</dbReference>
<dbReference type="GO" id="GO:0005840">
    <property type="term" value="C:ribosome"/>
    <property type="evidence" value="ECO:0007669"/>
    <property type="project" value="UniProtKB-KW"/>
</dbReference>
<dbReference type="GO" id="GO:0003735">
    <property type="term" value="F:structural constituent of ribosome"/>
    <property type="evidence" value="ECO:0007669"/>
    <property type="project" value="InterPro"/>
</dbReference>
<dbReference type="GO" id="GO:0006412">
    <property type="term" value="P:translation"/>
    <property type="evidence" value="ECO:0007669"/>
    <property type="project" value="UniProtKB-UniRule"/>
</dbReference>
<dbReference type="HAMAP" id="MF_00358">
    <property type="entry name" value="Ribosomal_bS21"/>
    <property type="match status" value="1"/>
</dbReference>
<dbReference type="InterPro" id="IPR001911">
    <property type="entry name" value="Ribosomal_bS21"/>
</dbReference>
<dbReference type="NCBIfam" id="TIGR00030">
    <property type="entry name" value="S21p"/>
    <property type="match status" value="1"/>
</dbReference>
<dbReference type="Pfam" id="PF01165">
    <property type="entry name" value="Ribosomal_S21"/>
    <property type="match status" value="1"/>
</dbReference>
<proteinExistence type="inferred from homology"/>
<comment type="similarity">
    <text evidence="1">Belongs to the bacterial ribosomal protein bS21 family.</text>
</comment>
<gene>
    <name evidence="1" type="primary">rpsU</name>
    <name type="ordered locus">NSE_0827</name>
</gene>